<comment type="function">
    <text evidence="1 2">Has no antimicrobial activity against Gram-negative bacterium E.coli ATCC 25922, Gram-positive bacterium S.epidermidis ATCC 12228 and against fungus C.albicans ATCC 24433 at concentrations up to 100 uM (PubMed:29980138). Has an anti-inflammatory effect, since it inhibits the production of the pro-inflammatory cytokines TNF-alpha and IL-1 beta (PubMed:30734396). Has high activity of stimulation of insulin release, which may protect the species from being eaten by predators by causing fatal hypoglycemia (PubMed:30734396). Is not cytotoxic to cancer line cells (PubMed:30734396). Does not show hemolysis on mouse erythrocytes (PubMed:30734396). Adopts a mixture of alpha-helical and beta-sheet structures (PubMed:30734396).</text>
</comment>
<comment type="subunit">
    <text evidence="6">Exhibits a propensity to self-association and forms helical oligomers in membrane-mimetic environments.</text>
</comment>
<comment type="subcellular location">
    <subcellularLocation>
        <location evidence="1">Secreted</location>
    </subcellularLocation>
    <subcellularLocation>
        <location evidence="5">Target cell membrane</location>
    </subcellularLocation>
</comment>
<comment type="tissue specificity">
    <text evidence="5">Expressed by the skin glands.</text>
</comment>
<comment type="domain">
    <text evidence="4">Plasticins have huge conformational plasticity. They can display random coil, alpha-helical, beta-sheet or beta-harpin structures.</text>
</comment>
<comment type="mass spectrometry" mass="2004.2" method="MALDI" evidence="1"/>
<comment type="pharmaceutical">
    <text evidence="6">This peptide may represent a template for the design of potent anti-inflammatory agents for use in the control hyperinflammatory phase of sepsis, since it has the ability to inhibit production of TNF-alpha and IL-1 beta and to stimulate IL-10 production by peritoneal cells coupled with very low toxicity against mouse erythrocytes and A549 human lung adenocarcinoma cells.</text>
</comment>
<comment type="similarity">
    <text evidence="4">Belongs to the frog skin active peptide (FSAP) family. Plasticin subfamily.</text>
</comment>
<comment type="online information" name="The antimicrobial peptide database">
    <link uri="https://wangapd3.com/database/query_output.php?ID=02995"/>
</comment>
<name>PTC_PHYTB</name>
<sequence length="22" mass="1982">GLVSGLLNSVTGLLGNLAGGGL</sequence>
<reference key="1">
    <citation type="journal article" date="2018" name="Comp. Biochem. Physiol.">
        <title>Peptidomic analysis of the host-defense peptides in skin secretions of the Trinidadian leaf frog Phyllomedusa trinitatis (Phyllomedusidae).</title>
        <authorList>
            <person name="Mechkarska M."/>
            <person name="Coquet L."/>
            <person name="Leprince J."/>
            <person name="Auguste R.J."/>
            <person name="Jouenne T."/>
            <person name="Mangoni M.L."/>
            <person name="Conlon J.M."/>
        </authorList>
    </citation>
    <scope>PROTEIN SEQUENCE</scope>
    <scope>FUNCTION</scope>
    <scope>SYNTHESIS</scope>
    <scope>SUBCELLULAR LOCATION</scope>
    <scope>MASS SPECTROMETRY</scope>
    <source>
        <tissue>Skin secretion</tissue>
    </source>
</reference>
<reference key="2">
    <citation type="journal article" date="2019" name="J. Pept. Sci.">
        <title>Immunomodulatory, insulinotropic, and cytotoxic activities of phylloseptins and plasticin-TR from the Trinidanian leaf frog Phyllomedusa trinitatis.</title>
        <authorList>
            <person name="Pantic J."/>
            <person name="Guilhaudis L."/>
            <person name="Musale V."/>
            <person name="Attoub S."/>
            <person name="Lukic M.L."/>
            <person name="Mechkarska M."/>
            <person name="Conlon J.M."/>
        </authorList>
    </citation>
    <scope>FUNCTION</scope>
    <scope>SYNTHESIS</scope>
    <scope>SUBUNIT</scope>
</reference>
<accession>C0HLE0</accession>
<evidence type="ECO:0000269" key="1">
    <source>
    </source>
</evidence>
<evidence type="ECO:0000269" key="2">
    <source>
    </source>
</evidence>
<evidence type="ECO:0000303" key="3">
    <source>
    </source>
</evidence>
<evidence type="ECO:0000305" key="4"/>
<evidence type="ECO:0000305" key="5">
    <source>
    </source>
</evidence>
<evidence type="ECO:0000305" key="6">
    <source>
    </source>
</evidence>
<feature type="peptide" id="PRO_0000445208" description="Plasticin-TR" evidence="1">
    <location>
        <begin position="1"/>
        <end position="22"/>
    </location>
</feature>
<organism>
    <name type="scientific">Phyllomedusa trinitatis</name>
    <name type="common">Trinidad leaf frog</name>
    <dbReference type="NCBI Taxonomy" id="332092"/>
    <lineage>
        <taxon>Eukaryota</taxon>
        <taxon>Metazoa</taxon>
        <taxon>Chordata</taxon>
        <taxon>Craniata</taxon>
        <taxon>Vertebrata</taxon>
        <taxon>Euteleostomi</taxon>
        <taxon>Amphibia</taxon>
        <taxon>Batrachia</taxon>
        <taxon>Anura</taxon>
        <taxon>Neobatrachia</taxon>
        <taxon>Hyloidea</taxon>
        <taxon>Hylidae</taxon>
        <taxon>Phyllomedusinae</taxon>
        <taxon>Phyllomedusa</taxon>
    </lineage>
</organism>
<dbReference type="GO" id="GO:0005576">
    <property type="term" value="C:extracellular region"/>
    <property type="evidence" value="ECO:0007669"/>
    <property type="project" value="UniProtKB-SubCell"/>
</dbReference>
<dbReference type="GO" id="GO:0016020">
    <property type="term" value="C:membrane"/>
    <property type="evidence" value="ECO:0007669"/>
    <property type="project" value="UniProtKB-KW"/>
</dbReference>
<dbReference type="GO" id="GO:0044218">
    <property type="term" value="C:other organism cell membrane"/>
    <property type="evidence" value="ECO:0007669"/>
    <property type="project" value="UniProtKB-KW"/>
</dbReference>
<dbReference type="GO" id="GO:0006952">
    <property type="term" value="P:defense response"/>
    <property type="evidence" value="ECO:0007669"/>
    <property type="project" value="UniProtKB-KW"/>
</dbReference>
<protein>
    <recommendedName>
        <fullName evidence="3">Plasticin-TR</fullName>
        <shortName evidence="4">PTC-TR</shortName>
    </recommendedName>
</protein>
<keyword id="KW-0878">Amphibian defense peptide</keyword>
<keyword id="KW-0903">Direct protein sequencing</keyword>
<keyword id="KW-0472">Membrane</keyword>
<keyword id="KW-0582">Pharmaceutical</keyword>
<keyword id="KW-0964">Secreted</keyword>
<keyword id="KW-1052">Target cell membrane</keyword>
<keyword id="KW-1053">Target membrane</keyword>
<proteinExistence type="evidence at protein level"/>